<sequence length="149" mass="16849">MRAVIQRSKEASVTVANNIVGEIEHGLVVFLGVQASDTEKEIKWMAEKIRHLRIFEDDEGKMNHSLQDRGGKMLIVSQFTLYGDCRKGRRPSYSQAANPEFAKRIYDLFIEEVKKSGLEVATGIFQADMDVQLINDGPVTMLLDSEKIF</sequence>
<proteinExistence type="inferred from homology"/>
<feature type="chain" id="PRO_0000164536" description="D-aminoacyl-tRNA deacylase">
    <location>
        <begin position="1"/>
        <end position="149"/>
    </location>
</feature>
<feature type="short sequence motif" description="Gly-cisPro motif, important for rejection of L-amino acids" evidence="1">
    <location>
        <begin position="137"/>
        <end position="138"/>
    </location>
</feature>
<accession>Q6AS26</accession>
<organism>
    <name type="scientific">Desulfotalea psychrophila (strain LSv54 / DSM 12343)</name>
    <dbReference type="NCBI Taxonomy" id="177439"/>
    <lineage>
        <taxon>Bacteria</taxon>
        <taxon>Pseudomonadati</taxon>
        <taxon>Thermodesulfobacteriota</taxon>
        <taxon>Desulfobulbia</taxon>
        <taxon>Desulfobulbales</taxon>
        <taxon>Desulfocapsaceae</taxon>
        <taxon>Desulfotalea</taxon>
    </lineage>
</organism>
<gene>
    <name evidence="1" type="primary">dtd</name>
    <name type="ordered locus">DP0120</name>
</gene>
<name>DTD_DESPS</name>
<reference key="1">
    <citation type="journal article" date="2004" name="Environ. Microbiol.">
        <title>The genome of Desulfotalea psychrophila, a sulfate-reducing bacterium from permanently cold Arctic sediments.</title>
        <authorList>
            <person name="Rabus R."/>
            <person name="Ruepp A."/>
            <person name="Frickey T."/>
            <person name="Rattei T."/>
            <person name="Fartmann B."/>
            <person name="Stark M."/>
            <person name="Bauer M."/>
            <person name="Zibat A."/>
            <person name="Lombardot T."/>
            <person name="Becker I."/>
            <person name="Amann J."/>
            <person name="Gellner K."/>
            <person name="Teeling H."/>
            <person name="Leuschner W.D."/>
            <person name="Gloeckner F.-O."/>
            <person name="Lupas A.N."/>
            <person name="Amann R."/>
            <person name="Klenk H.-P."/>
        </authorList>
    </citation>
    <scope>NUCLEOTIDE SEQUENCE [LARGE SCALE GENOMIC DNA]</scope>
    <source>
        <strain>DSM 12343 / LSv54</strain>
    </source>
</reference>
<dbReference type="EC" id="3.1.1.96" evidence="1"/>
<dbReference type="EMBL" id="CR522870">
    <property type="protein sequence ID" value="CAG34849.1"/>
    <property type="molecule type" value="Genomic_DNA"/>
</dbReference>
<dbReference type="RefSeq" id="WP_011187365.1">
    <property type="nucleotide sequence ID" value="NC_006138.1"/>
</dbReference>
<dbReference type="SMR" id="Q6AS26"/>
<dbReference type="STRING" id="177439.DP0120"/>
<dbReference type="KEGG" id="dps:DP0120"/>
<dbReference type="eggNOG" id="COG1490">
    <property type="taxonomic scope" value="Bacteria"/>
</dbReference>
<dbReference type="HOGENOM" id="CLU_076901_1_0_7"/>
<dbReference type="OrthoDB" id="9801395at2"/>
<dbReference type="Proteomes" id="UP000000602">
    <property type="component" value="Chromosome"/>
</dbReference>
<dbReference type="GO" id="GO:0005737">
    <property type="term" value="C:cytoplasm"/>
    <property type="evidence" value="ECO:0007669"/>
    <property type="project" value="UniProtKB-SubCell"/>
</dbReference>
<dbReference type="GO" id="GO:0051500">
    <property type="term" value="F:D-tyrosyl-tRNA(Tyr) deacylase activity"/>
    <property type="evidence" value="ECO:0007669"/>
    <property type="project" value="TreeGrafter"/>
</dbReference>
<dbReference type="GO" id="GO:0106026">
    <property type="term" value="F:Gly-tRNA(Ala) deacylase activity"/>
    <property type="evidence" value="ECO:0007669"/>
    <property type="project" value="UniProtKB-UniRule"/>
</dbReference>
<dbReference type="GO" id="GO:0043908">
    <property type="term" value="F:Ser(Gly)-tRNA(Ala) hydrolase activity"/>
    <property type="evidence" value="ECO:0007669"/>
    <property type="project" value="UniProtKB-UniRule"/>
</dbReference>
<dbReference type="GO" id="GO:0000049">
    <property type="term" value="F:tRNA binding"/>
    <property type="evidence" value="ECO:0007669"/>
    <property type="project" value="UniProtKB-UniRule"/>
</dbReference>
<dbReference type="GO" id="GO:0019478">
    <property type="term" value="P:D-amino acid catabolic process"/>
    <property type="evidence" value="ECO:0007669"/>
    <property type="project" value="UniProtKB-UniRule"/>
</dbReference>
<dbReference type="CDD" id="cd00563">
    <property type="entry name" value="Dtyr_deacylase"/>
    <property type="match status" value="1"/>
</dbReference>
<dbReference type="FunFam" id="3.50.80.10:FF:000001">
    <property type="entry name" value="D-aminoacyl-tRNA deacylase"/>
    <property type="match status" value="1"/>
</dbReference>
<dbReference type="Gene3D" id="3.50.80.10">
    <property type="entry name" value="D-tyrosyl-tRNA(Tyr) deacylase"/>
    <property type="match status" value="1"/>
</dbReference>
<dbReference type="HAMAP" id="MF_00518">
    <property type="entry name" value="Deacylase_Dtd"/>
    <property type="match status" value="1"/>
</dbReference>
<dbReference type="InterPro" id="IPR003732">
    <property type="entry name" value="Daa-tRNA_deacyls_DTD"/>
</dbReference>
<dbReference type="InterPro" id="IPR023509">
    <property type="entry name" value="DTD-like_sf"/>
</dbReference>
<dbReference type="NCBIfam" id="TIGR00256">
    <property type="entry name" value="D-aminoacyl-tRNA deacylase"/>
    <property type="match status" value="1"/>
</dbReference>
<dbReference type="PANTHER" id="PTHR10472:SF5">
    <property type="entry name" value="D-AMINOACYL-TRNA DEACYLASE 1"/>
    <property type="match status" value="1"/>
</dbReference>
<dbReference type="PANTHER" id="PTHR10472">
    <property type="entry name" value="D-TYROSYL-TRNA TYR DEACYLASE"/>
    <property type="match status" value="1"/>
</dbReference>
<dbReference type="Pfam" id="PF02580">
    <property type="entry name" value="Tyr_Deacylase"/>
    <property type="match status" value="1"/>
</dbReference>
<dbReference type="SUPFAM" id="SSF69500">
    <property type="entry name" value="DTD-like"/>
    <property type="match status" value="1"/>
</dbReference>
<evidence type="ECO:0000255" key="1">
    <source>
        <dbReference type="HAMAP-Rule" id="MF_00518"/>
    </source>
</evidence>
<protein>
    <recommendedName>
        <fullName evidence="1">D-aminoacyl-tRNA deacylase</fullName>
        <shortName evidence="1">DTD</shortName>
        <ecNumber evidence="1">3.1.1.96</ecNumber>
    </recommendedName>
    <alternativeName>
        <fullName evidence="1">Gly-tRNA(Ala) deacylase</fullName>
    </alternativeName>
</protein>
<keyword id="KW-0963">Cytoplasm</keyword>
<keyword id="KW-0378">Hydrolase</keyword>
<keyword id="KW-1185">Reference proteome</keyword>
<keyword id="KW-0694">RNA-binding</keyword>
<keyword id="KW-0820">tRNA-binding</keyword>
<comment type="function">
    <text evidence="1">An aminoacyl-tRNA editing enzyme that deacylates mischarged D-aminoacyl-tRNAs. Also deacylates mischarged glycyl-tRNA(Ala), protecting cells against glycine mischarging by AlaRS. Acts via tRNA-based rather than protein-based catalysis; rejects L-amino acids rather than detecting D-amino acids in the active site. By recycling D-aminoacyl-tRNA to D-amino acids and free tRNA molecules, this enzyme counteracts the toxicity associated with the formation of D-aminoacyl-tRNA entities in vivo and helps enforce protein L-homochirality.</text>
</comment>
<comment type="catalytic activity">
    <reaction evidence="1">
        <text>glycyl-tRNA(Ala) + H2O = tRNA(Ala) + glycine + H(+)</text>
        <dbReference type="Rhea" id="RHEA:53744"/>
        <dbReference type="Rhea" id="RHEA-COMP:9657"/>
        <dbReference type="Rhea" id="RHEA-COMP:13640"/>
        <dbReference type="ChEBI" id="CHEBI:15377"/>
        <dbReference type="ChEBI" id="CHEBI:15378"/>
        <dbReference type="ChEBI" id="CHEBI:57305"/>
        <dbReference type="ChEBI" id="CHEBI:78442"/>
        <dbReference type="ChEBI" id="CHEBI:78522"/>
        <dbReference type="EC" id="3.1.1.96"/>
    </reaction>
</comment>
<comment type="catalytic activity">
    <reaction evidence="1">
        <text>a D-aminoacyl-tRNA + H2O = a tRNA + a D-alpha-amino acid + H(+)</text>
        <dbReference type="Rhea" id="RHEA:13953"/>
        <dbReference type="Rhea" id="RHEA-COMP:10123"/>
        <dbReference type="Rhea" id="RHEA-COMP:10124"/>
        <dbReference type="ChEBI" id="CHEBI:15377"/>
        <dbReference type="ChEBI" id="CHEBI:15378"/>
        <dbReference type="ChEBI" id="CHEBI:59871"/>
        <dbReference type="ChEBI" id="CHEBI:78442"/>
        <dbReference type="ChEBI" id="CHEBI:79333"/>
        <dbReference type="EC" id="3.1.1.96"/>
    </reaction>
</comment>
<comment type="subunit">
    <text evidence="1">Homodimer.</text>
</comment>
<comment type="subcellular location">
    <subcellularLocation>
        <location evidence="1">Cytoplasm</location>
    </subcellularLocation>
</comment>
<comment type="domain">
    <text evidence="1">A Gly-cisPro motif from one monomer fits into the active site of the other monomer to allow specific chiral rejection of L-amino acids.</text>
</comment>
<comment type="similarity">
    <text evidence="1">Belongs to the DTD family.</text>
</comment>